<proteinExistence type="inferred from homology"/>
<reference key="1">
    <citation type="submission" date="2006-12" db="EMBL/GenBank/DDBJ databases">
        <title>Complete sequence of Acidovorax avenae subsp. citrulli AAC00-1.</title>
        <authorList>
            <person name="Copeland A."/>
            <person name="Lucas S."/>
            <person name="Lapidus A."/>
            <person name="Barry K."/>
            <person name="Detter J.C."/>
            <person name="Glavina del Rio T."/>
            <person name="Dalin E."/>
            <person name="Tice H."/>
            <person name="Pitluck S."/>
            <person name="Kiss H."/>
            <person name="Brettin T."/>
            <person name="Bruce D."/>
            <person name="Han C."/>
            <person name="Tapia R."/>
            <person name="Gilna P."/>
            <person name="Schmutz J."/>
            <person name="Larimer F."/>
            <person name="Land M."/>
            <person name="Hauser L."/>
            <person name="Kyrpides N."/>
            <person name="Kim E."/>
            <person name="Stahl D."/>
            <person name="Richardson P."/>
        </authorList>
    </citation>
    <scope>NUCLEOTIDE SEQUENCE [LARGE SCALE GENOMIC DNA]</scope>
    <source>
        <strain>AAC00-1</strain>
    </source>
</reference>
<protein>
    <recommendedName>
        <fullName evidence="1">2,3,4,5-tetrahydropyridine-2,6-dicarboxylate N-succinyltransferase</fullName>
        <ecNumber evidence="1">2.3.1.117</ecNumber>
    </recommendedName>
    <alternativeName>
        <fullName evidence="1">Tetrahydrodipicolinate N-succinyltransferase</fullName>
        <shortName evidence="1">THDP succinyltransferase</shortName>
        <shortName evidence="1">THP succinyltransferase</shortName>
        <shortName evidence="1">Tetrahydropicolinate succinylase</shortName>
    </alternativeName>
</protein>
<gene>
    <name evidence="1" type="primary">dapD</name>
    <name type="ordered locus">Aave_2484</name>
</gene>
<feature type="chain" id="PRO_1000047110" description="2,3,4,5-tetrahydropyridine-2,6-dicarboxylate N-succinyltransferase">
    <location>
        <begin position="1"/>
        <end position="274"/>
    </location>
</feature>
<feature type="binding site" evidence="1">
    <location>
        <position position="106"/>
    </location>
    <ligand>
        <name>substrate</name>
    </ligand>
</feature>
<feature type="binding site" evidence="1">
    <location>
        <position position="143"/>
    </location>
    <ligand>
        <name>substrate</name>
    </ligand>
</feature>
<keyword id="KW-0012">Acyltransferase</keyword>
<keyword id="KW-0028">Amino-acid biosynthesis</keyword>
<keyword id="KW-0963">Cytoplasm</keyword>
<keyword id="KW-0220">Diaminopimelate biosynthesis</keyword>
<keyword id="KW-0457">Lysine biosynthesis</keyword>
<keyword id="KW-0677">Repeat</keyword>
<keyword id="KW-0808">Transferase</keyword>
<organism>
    <name type="scientific">Paracidovorax citrulli (strain AAC00-1)</name>
    <name type="common">Acidovorax citrulli</name>
    <dbReference type="NCBI Taxonomy" id="397945"/>
    <lineage>
        <taxon>Bacteria</taxon>
        <taxon>Pseudomonadati</taxon>
        <taxon>Pseudomonadota</taxon>
        <taxon>Betaproteobacteria</taxon>
        <taxon>Burkholderiales</taxon>
        <taxon>Comamonadaceae</taxon>
        <taxon>Paracidovorax</taxon>
    </lineage>
</organism>
<accession>A1TQ21</accession>
<evidence type="ECO:0000255" key="1">
    <source>
        <dbReference type="HAMAP-Rule" id="MF_00811"/>
    </source>
</evidence>
<comment type="catalytic activity">
    <reaction evidence="1">
        <text>(S)-2,3,4,5-tetrahydrodipicolinate + succinyl-CoA + H2O = (S)-2-succinylamino-6-oxoheptanedioate + CoA</text>
        <dbReference type="Rhea" id="RHEA:17325"/>
        <dbReference type="ChEBI" id="CHEBI:15377"/>
        <dbReference type="ChEBI" id="CHEBI:15685"/>
        <dbReference type="ChEBI" id="CHEBI:16845"/>
        <dbReference type="ChEBI" id="CHEBI:57287"/>
        <dbReference type="ChEBI" id="CHEBI:57292"/>
        <dbReference type="EC" id="2.3.1.117"/>
    </reaction>
</comment>
<comment type="pathway">
    <text evidence="1">Amino-acid biosynthesis; L-lysine biosynthesis via DAP pathway; LL-2,6-diaminopimelate from (S)-tetrahydrodipicolinate (succinylase route): step 1/3.</text>
</comment>
<comment type="subunit">
    <text evidence="1">Homotrimer.</text>
</comment>
<comment type="subcellular location">
    <subcellularLocation>
        <location evidence="1">Cytoplasm</location>
    </subcellularLocation>
</comment>
<comment type="similarity">
    <text evidence="1">Belongs to the transferase hexapeptide repeat family.</text>
</comment>
<name>DAPD_PARC0</name>
<sequence>MTQQLQNIIDTAWENRASLSPSAAPREVQDAVEHVIAELDAGKLRVATREGVGQWTVHQWIKKAVLLSFRLKDNELIEAGSLGFYDKVPTKFAGRSAAEMAATGVRVVPPAVARRGSFIAKGAILMPSYVNIGAYVDEGTMVDTWATVGSCAQVGKHVHLSGGVGLGGVLEPLQANPTIIEDNCFIGARSEIVEGVIVEENSVISMGVYIGQSTPIYDRATDTVSYGRVPAGSVVVSGSLPKGDGKYSMYAAIIVKKVDAKTRSTTSLNDLLRD</sequence>
<dbReference type="EC" id="2.3.1.117" evidence="1"/>
<dbReference type="EMBL" id="CP000512">
    <property type="protein sequence ID" value="ABM33059.1"/>
    <property type="molecule type" value="Genomic_DNA"/>
</dbReference>
<dbReference type="RefSeq" id="WP_011795588.1">
    <property type="nucleotide sequence ID" value="NC_008752.1"/>
</dbReference>
<dbReference type="SMR" id="A1TQ21"/>
<dbReference type="STRING" id="397945.Aave_2484"/>
<dbReference type="GeneID" id="79792060"/>
<dbReference type="KEGG" id="aav:Aave_2484"/>
<dbReference type="eggNOG" id="COG2171">
    <property type="taxonomic scope" value="Bacteria"/>
</dbReference>
<dbReference type="HOGENOM" id="CLU_050859_0_1_4"/>
<dbReference type="OrthoDB" id="9775362at2"/>
<dbReference type="UniPathway" id="UPA00034">
    <property type="reaction ID" value="UER00019"/>
</dbReference>
<dbReference type="Proteomes" id="UP000002596">
    <property type="component" value="Chromosome"/>
</dbReference>
<dbReference type="GO" id="GO:0005737">
    <property type="term" value="C:cytoplasm"/>
    <property type="evidence" value="ECO:0007669"/>
    <property type="project" value="UniProtKB-SubCell"/>
</dbReference>
<dbReference type="GO" id="GO:0008666">
    <property type="term" value="F:2,3,4,5-tetrahydropyridine-2,6-dicarboxylate N-succinyltransferase activity"/>
    <property type="evidence" value="ECO:0007669"/>
    <property type="project" value="UniProtKB-UniRule"/>
</dbReference>
<dbReference type="GO" id="GO:0016779">
    <property type="term" value="F:nucleotidyltransferase activity"/>
    <property type="evidence" value="ECO:0007669"/>
    <property type="project" value="TreeGrafter"/>
</dbReference>
<dbReference type="GO" id="GO:0019877">
    <property type="term" value="P:diaminopimelate biosynthetic process"/>
    <property type="evidence" value="ECO:0007669"/>
    <property type="project" value="UniProtKB-UniRule"/>
</dbReference>
<dbReference type="GO" id="GO:0009089">
    <property type="term" value="P:lysine biosynthetic process via diaminopimelate"/>
    <property type="evidence" value="ECO:0007669"/>
    <property type="project" value="UniProtKB-UniRule"/>
</dbReference>
<dbReference type="CDD" id="cd03350">
    <property type="entry name" value="LbH_THP_succinylT"/>
    <property type="match status" value="1"/>
</dbReference>
<dbReference type="Gene3D" id="2.160.10.10">
    <property type="entry name" value="Hexapeptide repeat proteins"/>
    <property type="match status" value="1"/>
</dbReference>
<dbReference type="Gene3D" id="1.10.166.10">
    <property type="entry name" value="Tetrahydrodipicolinate-N-succinyltransferase, N-terminal domain"/>
    <property type="match status" value="1"/>
</dbReference>
<dbReference type="HAMAP" id="MF_00811">
    <property type="entry name" value="DapD"/>
    <property type="match status" value="1"/>
</dbReference>
<dbReference type="InterPro" id="IPR005664">
    <property type="entry name" value="DapD_Trfase_Hexpep_rpt_fam"/>
</dbReference>
<dbReference type="InterPro" id="IPR001451">
    <property type="entry name" value="Hexapep"/>
</dbReference>
<dbReference type="InterPro" id="IPR018357">
    <property type="entry name" value="Hexapep_transf_CS"/>
</dbReference>
<dbReference type="InterPro" id="IPR023180">
    <property type="entry name" value="THP_succinylTrfase_dom1"/>
</dbReference>
<dbReference type="InterPro" id="IPR037133">
    <property type="entry name" value="THP_succinylTrfase_N_sf"/>
</dbReference>
<dbReference type="InterPro" id="IPR011004">
    <property type="entry name" value="Trimer_LpxA-like_sf"/>
</dbReference>
<dbReference type="NCBIfam" id="TIGR00965">
    <property type="entry name" value="dapD"/>
    <property type="match status" value="1"/>
</dbReference>
<dbReference type="NCBIfam" id="NF008808">
    <property type="entry name" value="PRK11830.1"/>
    <property type="match status" value="1"/>
</dbReference>
<dbReference type="PANTHER" id="PTHR19136:SF52">
    <property type="entry name" value="2,3,4,5-TETRAHYDROPYRIDINE-2,6-DICARBOXYLATE N-SUCCINYLTRANSFERASE"/>
    <property type="match status" value="1"/>
</dbReference>
<dbReference type="PANTHER" id="PTHR19136">
    <property type="entry name" value="MOLYBDENUM COFACTOR GUANYLYLTRANSFERASE"/>
    <property type="match status" value="1"/>
</dbReference>
<dbReference type="Pfam" id="PF14602">
    <property type="entry name" value="Hexapep_2"/>
    <property type="match status" value="1"/>
</dbReference>
<dbReference type="Pfam" id="PF14805">
    <property type="entry name" value="THDPS_N_2"/>
    <property type="match status" value="1"/>
</dbReference>
<dbReference type="SUPFAM" id="SSF51161">
    <property type="entry name" value="Trimeric LpxA-like enzymes"/>
    <property type="match status" value="1"/>
</dbReference>
<dbReference type="PROSITE" id="PS00101">
    <property type="entry name" value="HEXAPEP_TRANSFERASES"/>
    <property type="match status" value="1"/>
</dbReference>